<evidence type="ECO:0000255" key="1">
    <source>
        <dbReference type="HAMAP-Rule" id="MF_00021"/>
    </source>
</evidence>
<evidence type="ECO:0000305" key="2"/>
<reference key="1">
    <citation type="journal article" date="1997" name="Microbiology">
        <title>Sequencing and functional annotation of the Bacillus subtilis genes in the 200 kb rrnB-dnaB region.</title>
        <authorList>
            <person name="Lapidus A."/>
            <person name="Galleron N."/>
            <person name="Sorokin A."/>
            <person name="Ehrlich S.D."/>
        </authorList>
    </citation>
    <scope>NUCLEOTIDE SEQUENCE [GENOMIC DNA]</scope>
    <source>
        <strain>168</strain>
    </source>
</reference>
<reference key="2">
    <citation type="journal article" date="1997" name="Nature">
        <title>The complete genome sequence of the Gram-positive bacterium Bacillus subtilis.</title>
        <authorList>
            <person name="Kunst F."/>
            <person name="Ogasawara N."/>
            <person name="Moszer I."/>
            <person name="Albertini A.M."/>
            <person name="Alloni G."/>
            <person name="Azevedo V."/>
            <person name="Bertero M.G."/>
            <person name="Bessieres P."/>
            <person name="Bolotin A."/>
            <person name="Borchert S."/>
            <person name="Borriss R."/>
            <person name="Boursier L."/>
            <person name="Brans A."/>
            <person name="Braun M."/>
            <person name="Brignell S.C."/>
            <person name="Bron S."/>
            <person name="Brouillet S."/>
            <person name="Bruschi C.V."/>
            <person name="Caldwell B."/>
            <person name="Capuano V."/>
            <person name="Carter N.M."/>
            <person name="Choi S.-K."/>
            <person name="Codani J.-J."/>
            <person name="Connerton I.F."/>
            <person name="Cummings N.J."/>
            <person name="Daniel R.A."/>
            <person name="Denizot F."/>
            <person name="Devine K.M."/>
            <person name="Duesterhoeft A."/>
            <person name="Ehrlich S.D."/>
            <person name="Emmerson P.T."/>
            <person name="Entian K.-D."/>
            <person name="Errington J."/>
            <person name="Fabret C."/>
            <person name="Ferrari E."/>
            <person name="Foulger D."/>
            <person name="Fritz C."/>
            <person name="Fujita M."/>
            <person name="Fujita Y."/>
            <person name="Fuma S."/>
            <person name="Galizzi A."/>
            <person name="Galleron N."/>
            <person name="Ghim S.-Y."/>
            <person name="Glaser P."/>
            <person name="Goffeau A."/>
            <person name="Golightly E.J."/>
            <person name="Grandi G."/>
            <person name="Guiseppi G."/>
            <person name="Guy B.J."/>
            <person name="Haga K."/>
            <person name="Haiech J."/>
            <person name="Harwood C.R."/>
            <person name="Henaut A."/>
            <person name="Hilbert H."/>
            <person name="Holsappel S."/>
            <person name="Hosono S."/>
            <person name="Hullo M.-F."/>
            <person name="Itaya M."/>
            <person name="Jones L.-M."/>
            <person name="Joris B."/>
            <person name="Karamata D."/>
            <person name="Kasahara Y."/>
            <person name="Klaerr-Blanchard M."/>
            <person name="Klein C."/>
            <person name="Kobayashi Y."/>
            <person name="Koetter P."/>
            <person name="Koningstein G."/>
            <person name="Krogh S."/>
            <person name="Kumano M."/>
            <person name="Kurita K."/>
            <person name="Lapidus A."/>
            <person name="Lardinois S."/>
            <person name="Lauber J."/>
            <person name="Lazarevic V."/>
            <person name="Lee S.-M."/>
            <person name="Levine A."/>
            <person name="Liu H."/>
            <person name="Masuda S."/>
            <person name="Mauel C."/>
            <person name="Medigue C."/>
            <person name="Medina N."/>
            <person name="Mellado R.P."/>
            <person name="Mizuno M."/>
            <person name="Moestl D."/>
            <person name="Nakai S."/>
            <person name="Noback M."/>
            <person name="Noone D."/>
            <person name="O'Reilly M."/>
            <person name="Ogawa K."/>
            <person name="Ogiwara A."/>
            <person name="Oudega B."/>
            <person name="Park S.-H."/>
            <person name="Parro V."/>
            <person name="Pohl T.M."/>
            <person name="Portetelle D."/>
            <person name="Porwollik S."/>
            <person name="Prescott A.M."/>
            <person name="Presecan E."/>
            <person name="Pujic P."/>
            <person name="Purnelle B."/>
            <person name="Rapoport G."/>
            <person name="Rey M."/>
            <person name="Reynolds S."/>
            <person name="Rieger M."/>
            <person name="Rivolta C."/>
            <person name="Rocha E."/>
            <person name="Roche B."/>
            <person name="Rose M."/>
            <person name="Sadaie Y."/>
            <person name="Sato T."/>
            <person name="Scanlan E."/>
            <person name="Schleich S."/>
            <person name="Schroeter R."/>
            <person name="Scoffone F."/>
            <person name="Sekiguchi J."/>
            <person name="Sekowska A."/>
            <person name="Seror S.J."/>
            <person name="Serror P."/>
            <person name="Shin B.-S."/>
            <person name="Soldo B."/>
            <person name="Sorokin A."/>
            <person name="Tacconi E."/>
            <person name="Takagi T."/>
            <person name="Takahashi H."/>
            <person name="Takemaru K."/>
            <person name="Takeuchi M."/>
            <person name="Tamakoshi A."/>
            <person name="Tanaka T."/>
            <person name="Terpstra P."/>
            <person name="Tognoni A."/>
            <person name="Tosato V."/>
            <person name="Uchiyama S."/>
            <person name="Vandenbol M."/>
            <person name="Vannier F."/>
            <person name="Vassarotti A."/>
            <person name="Viari A."/>
            <person name="Wambutt R."/>
            <person name="Wedler E."/>
            <person name="Wedler H."/>
            <person name="Weitzenegger T."/>
            <person name="Winters P."/>
            <person name="Wipat A."/>
            <person name="Yamamoto H."/>
            <person name="Yamane K."/>
            <person name="Yasumoto K."/>
            <person name="Yata K."/>
            <person name="Yoshida K."/>
            <person name="Yoshikawa H.-F."/>
            <person name="Zumstein E."/>
            <person name="Yoshikawa H."/>
            <person name="Danchin A."/>
        </authorList>
    </citation>
    <scope>NUCLEOTIDE SEQUENCE [LARGE SCALE GENOMIC DNA]</scope>
    <source>
        <strain>168</strain>
    </source>
</reference>
<reference key="3">
    <citation type="journal article" date="2009" name="Microbiology">
        <title>From a consortium sequence to a unified sequence: the Bacillus subtilis 168 reference genome a decade later.</title>
        <authorList>
            <person name="Barbe V."/>
            <person name="Cruveiller S."/>
            <person name="Kunst F."/>
            <person name="Lenoble P."/>
            <person name="Meurice G."/>
            <person name="Sekowska A."/>
            <person name="Vallenet D."/>
            <person name="Wang T."/>
            <person name="Moszer I."/>
            <person name="Medigue C."/>
            <person name="Danchin A."/>
        </authorList>
    </citation>
    <scope>SEQUENCE REVISION TO C-TERMINUS</scope>
</reference>
<gene>
    <name evidence="1" type="primary">thiI</name>
    <name type="synonym">ytbJ</name>
    <name type="ordered locus">BSU29580</name>
</gene>
<feature type="chain" id="PRO_0000154833" description="Probable tRNA sulfurtransferase">
    <location>
        <begin position="1"/>
        <end position="401"/>
    </location>
</feature>
<feature type="domain" description="THUMP" evidence="1">
    <location>
        <begin position="60"/>
        <end position="165"/>
    </location>
</feature>
<feature type="binding site" evidence="1">
    <location>
        <begin position="183"/>
        <end position="184"/>
    </location>
    <ligand>
        <name>ATP</name>
        <dbReference type="ChEBI" id="CHEBI:30616"/>
    </ligand>
</feature>
<feature type="binding site" evidence="1">
    <location>
        <begin position="208"/>
        <end position="209"/>
    </location>
    <ligand>
        <name>ATP</name>
        <dbReference type="ChEBI" id="CHEBI:30616"/>
    </ligand>
</feature>
<feature type="binding site" evidence="1">
    <location>
        <position position="265"/>
    </location>
    <ligand>
        <name>ATP</name>
        <dbReference type="ChEBI" id="CHEBI:30616"/>
    </ligand>
</feature>
<feature type="binding site" evidence="1">
    <location>
        <position position="287"/>
    </location>
    <ligand>
        <name>ATP</name>
        <dbReference type="ChEBI" id="CHEBI:30616"/>
    </ligand>
</feature>
<feature type="binding site" evidence="1">
    <location>
        <position position="296"/>
    </location>
    <ligand>
        <name>ATP</name>
        <dbReference type="ChEBI" id="CHEBI:30616"/>
    </ligand>
</feature>
<feature type="sequence conflict" description="In Ref. 1; AAC00308." evidence="2" ref="1">
    <original>KTR</original>
    <variation>ENYC</variation>
    <location>
        <begin position="354"/>
        <end position="356"/>
    </location>
</feature>
<protein>
    <recommendedName>
        <fullName evidence="1">Probable tRNA sulfurtransferase</fullName>
        <ecNumber evidence="1">2.8.1.4</ecNumber>
    </recommendedName>
    <alternativeName>
        <fullName evidence="1">Sulfur carrier protein ThiS sulfurtransferase</fullName>
    </alternativeName>
    <alternativeName>
        <fullName evidence="1">Thiamine biosynthesis protein ThiI</fullName>
    </alternativeName>
    <alternativeName>
        <fullName evidence="1">tRNA 4-thiouridine synthase</fullName>
    </alternativeName>
</protein>
<name>THII_BACSU</name>
<dbReference type="EC" id="2.8.1.4" evidence="1"/>
<dbReference type="EMBL" id="AF008220">
    <property type="protein sequence ID" value="AAC00308.1"/>
    <property type="status" value="ALT_FRAME"/>
    <property type="molecule type" value="Genomic_DNA"/>
</dbReference>
<dbReference type="EMBL" id="AL009126">
    <property type="protein sequence ID" value="CAB14936.2"/>
    <property type="molecule type" value="Genomic_DNA"/>
</dbReference>
<dbReference type="PIR" id="E69988">
    <property type="entry name" value="E69988"/>
</dbReference>
<dbReference type="RefSeq" id="WP_003229326.1">
    <property type="nucleotide sequence ID" value="NZ_OZ025638.1"/>
</dbReference>
<dbReference type="SMR" id="O34595"/>
<dbReference type="FunCoup" id="O34595">
    <property type="interactions" value="212"/>
</dbReference>
<dbReference type="STRING" id="224308.BSU29580"/>
<dbReference type="PaxDb" id="224308-BSU29580"/>
<dbReference type="EnsemblBacteria" id="CAB14936">
    <property type="protein sequence ID" value="CAB14936"/>
    <property type="gene ID" value="BSU_29580"/>
</dbReference>
<dbReference type="GeneID" id="937471"/>
<dbReference type="KEGG" id="bsu:BSU29580"/>
<dbReference type="PATRIC" id="fig|224308.179.peg.3214"/>
<dbReference type="eggNOG" id="COG0301">
    <property type="taxonomic scope" value="Bacteria"/>
</dbReference>
<dbReference type="InParanoid" id="O34595"/>
<dbReference type="OrthoDB" id="9773948at2"/>
<dbReference type="PhylomeDB" id="O34595"/>
<dbReference type="BioCyc" id="BSUB:BSU29580-MONOMER"/>
<dbReference type="BioCyc" id="MetaCyc:BSU29580-MONOMER"/>
<dbReference type="UniPathway" id="UPA00060"/>
<dbReference type="Proteomes" id="UP000001570">
    <property type="component" value="Chromosome"/>
</dbReference>
<dbReference type="GO" id="GO:0005829">
    <property type="term" value="C:cytosol"/>
    <property type="evidence" value="ECO:0000318"/>
    <property type="project" value="GO_Central"/>
</dbReference>
<dbReference type="GO" id="GO:0005524">
    <property type="term" value="F:ATP binding"/>
    <property type="evidence" value="ECO:0007669"/>
    <property type="project" value="UniProtKB-UniRule"/>
</dbReference>
<dbReference type="GO" id="GO:0004810">
    <property type="term" value="F:CCA tRNA nucleotidyltransferase activity"/>
    <property type="evidence" value="ECO:0007669"/>
    <property type="project" value="InterPro"/>
</dbReference>
<dbReference type="GO" id="GO:0000049">
    <property type="term" value="F:tRNA binding"/>
    <property type="evidence" value="ECO:0007669"/>
    <property type="project" value="UniProtKB-UniRule"/>
</dbReference>
<dbReference type="GO" id="GO:0140741">
    <property type="term" value="F:tRNA-uracil-4 sulfurtransferase activity"/>
    <property type="evidence" value="ECO:0007669"/>
    <property type="project" value="UniProtKB-EC"/>
</dbReference>
<dbReference type="GO" id="GO:0009228">
    <property type="term" value="P:thiamine biosynthetic process"/>
    <property type="evidence" value="ECO:0007669"/>
    <property type="project" value="UniProtKB-KW"/>
</dbReference>
<dbReference type="GO" id="GO:0009229">
    <property type="term" value="P:thiamine diphosphate biosynthetic process"/>
    <property type="evidence" value="ECO:0007669"/>
    <property type="project" value="UniProtKB-UniRule"/>
</dbReference>
<dbReference type="GO" id="GO:0052837">
    <property type="term" value="P:thiazole biosynthetic process"/>
    <property type="evidence" value="ECO:0000318"/>
    <property type="project" value="GO_Central"/>
</dbReference>
<dbReference type="GO" id="GO:0002937">
    <property type="term" value="P:tRNA 4-thiouridine biosynthesis"/>
    <property type="evidence" value="ECO:0000318"/>
    <property type="project" value="GO_Central"/>
</dbReference>
<dbReference type="CDD" id="cd01712">
    <property type="entry name" value="PPase_ThiI"/>
    <property type="match status" value="1"/>
</dbReference>
<dbReference type="CDD" id="cd11716">
    <property type="entry name" value="THUMP_ThiI"/>
    <property type="match status" value="1"/>
</dbReference>
<dbReference type="FunFam" id="3.40.50.620:FF:000053">
    <property type="entry name" value="Probable tRNA sulfurtransferase"/>
    <property type="match status" value="1"/>
</dbReference>
<dbReference type="Gene3D" id="3.30.2130.30">
    <property type="match status" value="1"/>
</dbReference>
<dbReference type="Gene3D" id="3.40.50.620">
    <property type="entry name" value="HUPs"/>
    <property type="match status" value="1"/>
</dbReference>
<dbReference type="HAMAP" id="MF_00021">
    <property type="entry name" value="ThiI"/>
    <property type="match status" value="1"/>
</dbReference>
<dbReference type="InterPro" id="IPR014729">
    <property type="entry name" value="Rossmann-like_a/b/a_fold"/>
</dbReference>
<dbReference type="InterPro" id="IPR020536">
    <property type="entry name" value="ThiI_AANH"/>
</dbReference>
<dbReference type="InterPro" id="IPR054173">
    <property type="entry name" value="ThiI_fer"/>
</dbReference>
<dbReference type="InterPro" id="IPR049961">
    <property type="entry name" value="ThiI_N"/>
</dbReference>
<dbReference type="InterPro" id="IPR004114">
    <property type="entry name" value="THUMP_dom"/>
</dbReference>
<dbReference type="InterPro" id="IPR049962">
    <property type="entry name" value="THUMP_ThiI"/>
</dbReference>
<dbReference type="InterPro" id="IPR003720">
    <property type="entry name" value="tRNA_STrfase"/>
</dbReference>
<dbReference type="InterPro" id="IPR050102">
    <property type="entry name" value="tRNA_sulfurtransferase_ThiI"/>
</dbReference>
<dbReference type="NCBIfam" id="TIGR00342">
    <property type="entry name" value="tRNA uracil 4-sulfurtransferase ThiI"/>
    <property type="match status" value="1"/>
</dbReference>
<dbReference type="PANTHER" id="PTHR43209">
    <property type="entry name" value="TRNA SULFURTRANSFERASE"/>
    <property type="match status" value="1"/>
</dbReference>
<dbReference type="PANTHER" id="PTHR43209:SF1">
    <property type="entry name" value="TRNA SULFURTRANSFERASE"/>
    <property type="match status" value="1"/>
</dbReference>
<dbReference type="Pfam" id="PF02568">
    <property type="entry name" value="ThiI"/>
    <property type="match status" value="1"/>
</dbReference>
<dbReference type="Pfam" id="PF22025">
    <property type="entry name" value="ThiI_fer"/>
    <property type="match status" value="1"/>
</dbReference>
<dbReference type="Pfam" id="PF02926">
    <property type="entry name" value="THUMP"/>
    <property type="match status" value="1"/>
</dbReference>
<dbReference type="SMART" id="SM00981">
    <property type="entry name" value="THUMP"/>
    <property type="match status" value="1"/>
</dbReference>
<dbReference type="SUPFAM" id="SSF52402">
    <property type="entry name" value="Adenine nucleotide alpha hydrolases-like"/>
    <property type="match status" value="1"/>
</dbReference>
<dbReference type="SUPFAM" id="SSF143437">
    <property type="entry name" value="THUMP domain-like"/>
    <property type="match status" value="1"/>
</dbReference>
<dbReference type="PROSITE" id="PS51165">
    <property type="entry name" value="THUMP"/>
    <property type="match status" value="1"/>
</dbReference>
<accession>O34595</accession>
<sequence length="401" mass="45465">MNYDHILIRFGEISTKGKNRKSFIERLKQNIRLVLKDYPNLKYFSNRDRMTITLNGEDPEALFPHLKQVFGIQSFSLAIKCDSRLDDIKATALKAIKDQYKPGDTFKVATKRAYKQFELDTNQMNAEIGGHILRNTEGLTVDVRNPDIPLRIEIREEATFLTIRDEKGAGGLPVGSAGKAMLMLSGGFDSPVAGFYAMKRGLSVEAVHFFSPPYTSERAKQKVMDLAKCLSRFGGSMTLHIVPFTKTQELIQKQIPENYTMTATRRLMLQIADRIREKRNGLAIITGESLGQVASQTLESMYAINAVTSTPILRPLIAMDKTEIIEKSREIGTYETSIQPFEDCCTIFTPPSPKTRPKKEKIEHFESFVDFEPYIQEAVDNIETMTLYSEQEANDKFAELF</sequence>
<comment type="function">
    <text evidence="1">Catalyzes the ATP-dependent transfer of a sulfur to tRNA to produce 4-thiouridine in position 8 of tRNAs, which functions as a near-UV photosensor. Also catalyzes the transfer of sulfur to the sulfur carrier protein ThiS, forming ThiS-thiocarboxylate. This is a step in the synthesis of thiazole, in the thiamine biosynthesis pathway. The sulfur is donated as persulfide by IscS.</text>
</comment>
<comment type="catalytic activity">
    <reaction evidence="1">
        <text>[ThiI sulfur-carrier protein]-S-sulfanyl-L-cysteine + a uridine in tRNA + 2 reduced [2Fe-2S]-[ferredoxin] + ATP + H(+) = [ThiI sulfur-carrier protein]-L-cysteine + a 4-thiouridine in tRNA + 2 oxidized [2Fe-2S]-[ferredoxin] + AMP + diphosphate</text>
        <dbReference type="Rhea" id="RHEA:24176"/>
        <dbReference type="Rhea" id="RHEA-COMP:10000"/>
        <dbReference type="Rhea" id="RHEA-COMP:10001"/>
        <dbReference type="Rhea" id="RHEA-COMP:13337"/>
        <dbReference type="Rhea" id="RHEA-COMP:13338"/>
        <dbReference type="Rhea" id="RHEA-COMP:13339"/>
        <dbReference type="Rhea" id="RHEA-COMP:13340"/>
        <dbReference type="ChEBI" id="CHEBI:15378"/>
        <dbReference type="ChEBI" id="CHEBI:29950"/>
        <dbReference type="ChEBI" id="CHEBI:30616"/>
        <dbReference type="ChEBI" id="CHEBI:33019"/>
        <dbReference type="ChEBI" id="CHEBI:33737"/>
        <dbReference type="ChEBI" id="CHEBI:33738"/>
        <dbReference type="ChEBI" id="CHEBI:61963"/>
        <dbReference type="ChEBI" id="CHEBI:65315"/>
        <dbReference type="ChEBI" id="CHEBI:136798"/>
        <dbReference type="ChEBI" id="CHEBI:456215"/>
        <dbReference type="EC" id="2.8.1.4"/>
    </reaction>
</comment>
<comment type="catalytic activity">
    <reaction evidence="1">
        <text>[ThiS sulfur-carrier protein]-C-terminal Gly-Gly-AMP + S-sulfanyl-L-cysteinyl-[cysteine desulfurase] + AH2 = [ThiS sulfur-carrier protein]-C-terminal-Gly-aminoethanethioate + L-cysteinyl-[cysteine desulfurase] + A + AMP + 2 H(+)</text>
        <dbReference type="Rhea" id="RHEA:43340"/>
        <dbReference type="Rhea" id="RHEA-COMP:12157"/>
        <dbReference type="Rhea" id="RHEA-COMP:12158"/>
        <dbReference type="Rhea" id="RHEA-COMP:12910"/>
        <dbReference type="Rhea" id="RHEA-COMP:19908"/>
        <dbReference type="ChEBI" id="CHEBI:13193"/>
        <dbReference type="ChEBI" id="CHEBI:15378"/>
        <dbReference type="ChEBI" id="CHEBI:17499"/>
        <dbReference type="ChEBI" id="CHEBI:29950"/>
        <dbReference type="ChEBI" id="CHEBI:61963"/>
        <dbReference type="ChEBI" id="CHEBI:90618"/>
        <dbReference type="ChEBI" id="CHEBI:232372"/>
        <dbReference type="ChEBI" id="CHEBI:456215"/>
    </reaction>
</comment>
<comment type="pathway">
    <text evidence="1">Cofactor biosynthesis; thiamine diphosphate biosynthesis.</text>
</comment>
<comment type="subcellular location">
    <subcellularLocation>
        <location evidence="1">Cytoplasm</location>
    </subcellularLocation>
</comment>
<comment type="similarity">
    <text evidence="1">Belongs to the ThiI family.</text>
</comment>
<comment type="sequence caution" evidence="2">
    <conflict type="frameshift">
        <sequence resource="EMBL-CDS" id="AAC00308"/>
    </conflict>
</comment>
<proteinExistence type="inferred from homology"/>
<organism>
    <name type="scientific">Bacillus subtilis (strain 168)</name>
    <dbReference type="NCBI Taxonomy" id="224308"/>
    <lineage>
        <taxon>Bacteria</taxon>
        <taxon>Bacillati</taxon>
        <taxon>Bacillota</taxon>
        <taxon>Bacilli</taxon>
        <taxon>Bacillales</taxon>
        <taxon>Bacillaceae</taxon>
        <taxon>Bacillus</taxon>
    </lineage>
</organism>
<keyword id="KW-0067">ATP-binding</keyword>
<keyword id="KW-0963">Cytoplasm</keyword>
<keyword id="KW-0547">Nucleotide-binding</keyword>
<keyword id="KW-1185">Reference proteome</keyword>
<keyword id="KW-0694">RNA-binding</keyword>
<keyword id="KW-0784">Thiamine biosynthesis</keyword>
<keyword id="KW-0808">Transferase</keyword>
<keyword id="KW-0820">tRNA-binding</keyword>